<name>KDSA_LARHH</name>
<accession>C1DCC2</accession>
<keyword id="KW-0963">Cytoplasm</keyword>
<keyword id="KW-0448">Lipopolysaccharide biosynthesis</keyword>
<keyword id="KW-1185">Reference proteome</keyword>
<keyword id="KW-0808">Transferase</keyword>
<evidence type="ECO:0000255" key="1">
    <source>
        <dbReference type="HAMAP-Rule" id="MF_00056"/>
    </source>
</evidence>
<protein>
    <recommendedName>
        <fullName evidence="1">2-dehydro-3-deoxyphosphooctonate aldolase</fullName>
        <ecNumber evidence="1">2.5.1.55</ecNumber>
    </recommendedName>
    <alternativeName>
        <fullName evidence="1">3-deoxy-D-manno-octulosonic acid 8-phosphate synthase</fullName>
    </alternativeName>
    <alternativeName>
        <fullName evidence="1">KDO-8-phosphate synthase</fullName>
        <shortName evidence="1">KDO 8-P synthase</shortName>
        <shortName evidence="1">KDOPS</shortName>
    </alternativeName>
    <alternativeName>
        <fullName evidence="1">Phospho-2-dehydro-3-deoxyoctonate aldolase</fullName>
    </alternativeName>
</protein>
<sequence length="283" mass="30063">MKLCGFDAGLDQPLFLIAGPCVIEGEQFAIDTAGQLKEMAGRLGLPFIYKSSYDKANRSSDQSFRGFGIDAGLTILDKVKKQVGVPVLTDVHTAEEAPLAASVVDVLQTPAFLCRQTDFIRAVAATGKPVNIKKGQFLAPGDMLNVVAKARHGAREAGFDGDTIMVCERGASFGYNNLVSDMRSLAIMRGTGCPVVYDATHSVQLPGGQGTSSGGQREFVPVLARAAVATGIAGIFMETHPDPCKALSDGPNAWPLPRLYDLLATLVELDRLVKSRPLAEQAL</sequence>
<proteinExistence type="inferred from homology"/>
<feature type="chain" id="PRO_1000117786" description="2-dehydro-3-deoxyphosphooctonate aldolase">
    <location>
        <begin position="1"/>
        <end position="283"/>
    </location>
</feature>
<organism>
    <name type="scientific">Laribacter hongkongensis (strain HLHK9)</name>
    <dbReference type="NCBI Taxonomy" id="557598"/>
    <lineage>
        <taxon>Bacteria</taxon>
        <taxon>Pseudomonadati</taxon>
        <taxon>Pseudomonadota</taxon>
        <taxon>Betaproteobacteria</taxon>
        <taxon>Neisseriales</taxon>
        <taxon>Aquaspirillaceae</taxon>
        <taxon>Laribacter</taxon>
    </lineage>
</organism>
<dbReference type="EC" id="2.5.1.55" evidence="1"/>
<dbReference type="EMBL" id="CP001154">
    <property type="protein sequence ID" value="ACO73539.1"/>
    <property type="molecule type" value="Genomic_DNA"/>
</dbReference>
<dbReference type="RefSeq" id="WP_012696031.1">
    <property type="nucleotide sequence ID" value="NC_012559.1"/>
</dbReference>
<dbReference type="SMR" id="C1DCC2"/>
<dbReference type="STRING" id="557598.LHK_00546"/>
<dbReference type="GeneID" id="75109302"/>
<dbReference type="KEGG" id="lhk:LHK_00546"/>
<dbReference type="eggNOG" id="COG2877">
    <property type="taxonomic scope" value="Bacteria"/>
</dbReference>
<dbReference type="HOGENOM" id="CLU_036666_0_0_4"/>
<dbReference type="UniPathway" id="UPA00030"/>
<dbReference type="UniPathway" id="UPA00357">
    <property type="reaction ID" value="UER00474"/>
</dbReference>
<dbReference type="Proteomes" id="UP000002010">
    <property type="component" value="Chromosome"/>
</dbReference>
<dbReference type="GO" id="GO:0005737">
    <property type="term" value="C:cytoplasm"/>
    <property type="evidence" value="ECO:0007669"/>
    <property type="project" value="UniProtKB-SubCell"/>
</dbReference>
<dbReference type="GO" id="GO:0008676">
    <property type="term" value="F:3-deoxy-8-phosphooctulonate synthase activity"/>
    <property type="evidence" value="ECO:0007669"/>
    <property type="project" value="UniProtKB-UniRule"/>
</dbReference>
<dbReference type="GO" id="GO:0019294">
    <property type="term" value="P:keto-3-deoxy-D-manno-octulosonic acid biosynthetic process"/>
    <property type="evidence" value="ECO:0007669"/>
    <property type="project" value="UniProtKB-UniRule"/>
</dbReference>
<dbReference type="Gene3D" id="3.20.20.70">
    <property type="entry name" value="Aldolase class I"/>
    <property type="match status" value="1"/>
</dbReference>
<dbReference type="HAMAP" id="MF_00056">
    <property type="entry name" value="KDO8P_synth"/>
    <property type="match status" value="1"/>
</dbReference>
<dbReference type="InterPro" id="IPR013785">
    <property type="entry name" value="Aldolase_TIM"/>
</dbReference>
<dbReference type="InterPro" id="IPR006218">
    <property type="entry name" value="DAHP1/KDSA"/>
</dbReference>
<dbReference type="InterPro" id="IPR006269">
    <property type="entry name" value="KDO8P_synthase"/>
</dbReference>
<dbReference type="NCBIfam" id="TIGR01362">
    <property type="entry name" value="KDO8P_synth"/>
    <property type="match status" value="1"/>
</dbReference>
<dbReference type="NCBIfam" id="NF003543">
    <property type="entry name" value="PRK05198.1"/>
    <property type="match status" value="1"/>
</dbReference>
<dbReference type="PANTHER" id="PTHR21057">
    <property type="entry name" value="PHOSPHO-2-DEHYDRO-3-DEOXYHEPTONATE ALDOLASE"/>
    <property type="match status" value="1"/>
</dbReference>
<dbReference type="Pfam" id="PF00793">
    <property type="entry name" value="DAHP_synth_1"/>
    <property type="match status" value="1"/>
</dbReference>
<dbReference type="SUPFAM" id="SSF51569">
    <property type="entry name" value="Aldolase"/>
    <property type="match status" value="1"/>
</dbReference>
<reference key="1">
    <citation type="journal article" date="2009" name="PLoS Genet.">
        <title>The complete genome and proteome of Laribacter hongkongensis reveal potential mechanisms for adaptations to different temperatures and habitats.</title>
        <authorList>
            <person name="Woo P.C.Y."/>
            <person name="Lau S.K.P."/>
            <person name="Tse H."/>
            <person name="Teng J.L.L."/>
            <person name="Curreem S.O."/>
            <person name="Tsang A.K.L."/>
            <person name="Fan R.Y.Y."/>
            <person name="Wong G.K.M."/>
            <person name="Huang Y."/>
            <person name="Loman N.J."/>
            <person name="Snyder L.A.S."/>
            <person name="Cai J.J."/>
            <person name="Huang J.-D."/>
            <person name="Mak W."/>
            <person name="Pallen M.J."/>
            <person name="Lok S."/>
            <person name="Yuen K.-Y."/>
        </authorList>
    </citation>
    <scope>NUCLEOTIDE SEQUENCE [LARGE SCALE GENOMIC DNA]</scope>
    <source>
        <strain>HLHK9</strain>
    </source>
</reference>
<comment type="catalytic activity">
    <reaction evidence="1">
        <text>D-arabinose 5-phosphate + phosphoenolpyruvate + H2O = 3-deoxy-alpha-D-manno-2-octulosonate-8-phosphate + phosphate</text>
        <dbReference type="Rhea" id="RHEA:14053"/>
        <dbReference type="ChEBI" id="CHEBI:15377"/>
        <dbReference type="ChEBI" id="CHEBI:43474"/>
        <dbReference type="ChEBI" id="CHEBI:57693"/>
        <dbReference type="ChEBI" id="CHEBI:58702"/>
        <dbReference type="ChEBI" id="CHEBI:85985"/>
        <dbReference type="EC" id="2.5.1.55"/>
    </reaction>
</comment>
<comment type="pathway">
    <text evidence="1">Carbohydrate biosynthesis; 3-deoxy-D-manno-octulosonate biosynthesis; 3-deoxy-D-manno-octulosonate from D-ribulose 5-phosphate: step 2/3.</text>
</comment>
<comment type="pathway">
    <text evidence="1">Bacterial outer membrane biogenesis; lipopolysaccharide biosynthesis.</text>
</comment>
<comment type="subcellular location">
    <subcellularLocation>
        <location evidence="1">Cytoplasm</location>
    </subcellularLocation>
</comment>
<comment type="similarity">
    <text evidence="1">Belongs to the KdsA family.</text>
</comment>
<gene>
    <name evidence="1" type="primary">kdsA</name>
    <name type="ordered locus">LHK_00546</name>
</gene>